<protein>
    <recommendedName>
        <fullName evidence="1">Large ribosomal subunit protein bL28</fullName>
    </recommendedName>
    <alternativeName>
        <fullName evidence="2">50S ribosomal protein L28</fullName>
    </alternativeName>
</protein>
<gene>
    <name evidence="1" type="primary">rpmB</name>
    <name type="ordered locus">GM21_1054</name>
</gene>
<proteinExistence type="inferred from homology"/>
<organism>
    <name type="scientific">Geobacter sp. (strain M21)</name>
    <dbReference type="NCBI Taxonomy" id="443144"/>
    <lineage>
        <taxon>Bacteria</taxon>
        <taxon>Pseudomonadati</taxon>
        <taxon>Thermodesulfobacteriota</taxon>
        <taxon>Desulfuromonadia</taxon>
        <taxon>Geobacterales</taxon>
        <taxon>Geobacteraceae</taxon>
        <taxon>Geobacter</taxon>
    </lineage>
</organism>
<sequence>MSRICEICGKGPSFGNNVSHANNKTSKIWRPNLQKIKAVKNGTVRSIKVCTRCIRSGHVTKAL</sequence>
<feature type="chain" id="PRO_1000205600" description="Large ribosomal subunit protein bL28">
    <location>
        <begin position="1"/>
        <end position="63"/>
    </location>
</feature>
<evidence type="ECO:0000255" key="1">
    <source>
        <dbReference type="HAMAP-Rule" id="MF_00373"/>
    </source>
</evidence>
<evidence type="ECO:0000305" key="2"/>
<comment type="similarity">
    <text evidence="1">Belongs to the bacterial ribosomal protein bL28 family.</text>
</comment>
<keyword id="KW-0687">Ribonucleoprotein</keyword>
<keyword id="KW-0689">Ribosomal protein</keyword>
<accession>C6E2G9</accession>
<dbReference type="EMBL" id="CP001661">
    <property type="protein sequence ID" value="ACT17115.1"/>
    <property type="molecule type" value="Genomic_DNA"/>
</dbReference>
<dbReference type="SMR" id="C6E2G9"/>
<dbReference type="STRING" id="443144.GM21_1054"/>
<dbReference type="KEGG" id="gem:GM21_1054"/>
<dbReference type="eggNOG" id="COG0227">
    <property type="taxonomic scope" value="Bacteria"/>
</dbReference>
<dbReference type="HOGENOM" id="CLU_064548_7_0_7"/>
<dbReference type="OrthoDB" id="9805609at2"/>
<dbReference type="GO" id="GO:1990904">
    <property type="term" value="C:ribonucleoprotein complex"/>
    <property type="evidence" value="ECO:0007669"/>
    <property type="project" value="UniProtKB-KW"/>
</dbReference>
<dbReference type="GO" id="GO:0005840">
    <property type="term" value="C:ribosome"/>
    <property type="evidence" value="ECO:0007669"/>
    <property type="project" value="UniProtKB-KW"/>
</dbReference>
<dbReference type="GO" id="GO:0003735">
    <property type="term" value="F:structural constituent of ribosome"/>
    <property type="evidence" value="ECO:0007669"/>
    <property type="project" value="InterPro"/>
</dbReference>
<dbReference type="GO" id="GO:0006412">
    <property type="term" value="P:translation"/>
    <property type="evidence" value="ECO:0007669"/>
    <property type="project" value="UniProtKB-UniRule"/>
</dbReference>
<dbReference type="Gene3D" id="2.20.150.30">
    <property type="match status" value="1"/>
</dbReference>
<dbReference type="Gene3D" id="2.30.170.40">
    <property type="entry name" value="Ribosomal protein L28/L24"/>
    <property type="match status" value="1"/>
</dbReference>
<dbReference type="HAMAP" id="MF_00373">
    <property type="entry name" value="Ribosomal_bL28"/>
    <property type="match status" value="1"/>
</dbReference>
<dbReference type="InterPro" id="IPR050096">
    <property type="entry name" value="Bacterial_rp_bL28"/>
</dbReference>
<dbReference type="InterPro" id="IPR026569">
    <property type="entry name" value="Ribosomal_bL28"/>
</dbReference>
<dbReference type="InterPro" id="IPR034704">
    <property type="entry name" value="Ribosomal_bL28/bL31-like_sf"/>
</dbReference>
<dbReference type="InterPro" id="IPR001383">
    <property type="entry name" value="Ribosomal_bL28_bact-type"/>
</dbReference>
<dbReference type="InterPro" id="IPR037147">
    <property type="entry name" value="Ribosomal_bL28_sf"/>
</dbReference>
<dbReference type="NCBIfam" id="TIGR00009">
    <property type="entry name" value="L28"/>
    <property type="match status" value="1"/>
</dbReference>
<dbReference type="PANTHER" id="PTHR39080">
    <property type="entry name" value="50S RIBOSOMAL PROTEIN L28"/>
    <property type="match status" value="1"/>
</dbReference>
<dbReference type="PANTHER" id="PTHR39080:SF1">
    <property type="entry name" value="LARGE RIBOSOMAL SUBUNIT PROTEIN BL28A"/>
    <property type="match status" value="1"/>
</dbReference>
<dbReference type="Pfam" id="PF00830">
    <property type="entry name" value="Ribosomal_L28"/>
    <property type="match status" value="1"/>
</dbReference>
<dbReference type="SUPFAM" id="SSF143800">
    <property type="entry name" value="L28p-like"/>
    <property type="match status" value="1"/>
</dbReference>
<reference key="1">
    <citation type="submission" date="2009-07" db="EMBL/GenBank/DDBJ databases">
        <title>Complete sequence of Geobacter sp. M21.</title>
        <authorList>
            <consortium name="US DOE Joint Genome Institute"/>
            <person name="Lucas S."/>
            <person name="Copeland A."/>
            <person name="Lapidus A."/>
            <person name="Glavina del Rio T."/>
            <person name="Dalin E."/>
            <person name="Tice H."/>
            <person name="Bruce D."/>
            <person name="Goodwin L."/>
            <person name="Pitluck S."/>
            <person name="Saunders E."/>
            <person name="Brettin T."/>
            <person name="Detter J.C."/>
            <person name="Han C."/>
            <person name="Larimer F."/>
            <person name="Land M."/>
            <person name="Hauser L."/>
            <person name="Kyrpides N."/>
            <person name="Ovchinnikova G."/>
            <person name="Lovley D."/>
        </authorList>
    </citation>
    <scope>NUCLEOTIDE SEQUENCE [LARGE SCALE GENOMIC DNA]</scope>
    <source>
        <strain>M21</strain>
    </source>
</reference>
<name>RL28_GEOSM</name>